<proteinExistence type="inferred from homology"/>
<dbReference type="EC" id="1.3.7.7" evidence="1"/>
<dbReference type="EMBL" id="AB034704">
    <property type="protein sequence ID" value="BAA94058.1"/>
    <property type="molecule type" value="Genomic_DNA"/>
</dbReference>
<dbReference type="EMBL" id="AP012320">
    <property type="protein sequence ID" value="BAL96686.1"/>
    <property type="molecule type" value="Genomic_DNA"/>
</dbReference>
<dbReference type="PIR" id="T50905">
    <property type="entry name" value="T50905"/>
</dbReference>
<dbReference type="RefSeq" id="WP_014429547.1">
    <property type="nucleotide sequence ID" value="NC_017075.1"/>
</dbReference>
<dbReference type="SMR" id="Q9JPA3"/>
<dbReference type="STRING" id="983917.RGE_33470"/>
<dbReference type="KEGG" id="rge:RGE_33470"/>
<dbReference type="PATRIC" id="fig|983917.3.peg.3272"/>
<dbReference type="eggNOG" id="COG2710">
    <property type="taxonomic scope" value="Bacteria"/>
</dbReference>
<dbReference type="HOGENOM" id="CLU_025470_0_0_4"/>
<dbReference type="UniPathway" id="UPA00671"/>
<dbReference type="Proteomes" id="UP000007883">
    <property type="component" value="Chromosome"/>
</dbReference>
<dbReference type="GO" id="GO:0051539">
    <property type="term" value="F:4 iron, 4 sulfur cluster binding"/>
    <property type="evidence" value="ECO:0007669"/>
    <property type="project" value="UniProtKB-UniRule"/>
</dbReference>
<dbReference type="GO" id="GO:0005524">
    <property type="term" value="F:ATP binding"/>
    <property type="evidence" value="ECO:0007669"/>
    <property type="project" value="UniProtKB-UniRule"/>
</dbReference>
<dbReference type="GO" id="GO:0046872">
    <property type="term" value="F:metal ion binding"/>
    <property type="evidence" value="ECO:0007669"/>
    <property type="project" value="UniProtKB-KW"/>
</dbReference>
<dbReference type="GO" id="GO:0016730">
    <property type="term" value="F:oxidoreductase activity, acting on iron-sulfur proteins as donors"/>
    <property type="evidence" value="ECO:0007669"/>
    <property type="project" value="InterPro"/>
</dbReference>
<dbReference type="GO" id="GO:0016636">
    <property type="term" value="F:oxidoreductase activity, acting on the CH-CH group of donors, iron-sulfur protein as acceptor"/>
    <property type="evidence" value="ECO:0007669"/>
    <property type="project" value="UniProtKB-UniRule"/>
</dbReference>
<dbReference type="GO" id="GO:0036070">
    <property type="term" value="P:light-independent bacteriochlorophyll biosynthetic process"/>
    <property type="evidence" value="ECO:0007669"/>
    <property type="project" value="UniProtKB-UniRule"/>
</dbReference>
<dbReference type="GO" id="GO:0019685">
    <property type="term" value="P:photosynthesis, dark reaction"/>
    <property type="evidence" value="ECO:0007669"/>
    <property type="project" value="InterPro"/>
</dbReference>
<dbReference type="CDD" id="cd01981">
    <property type="entry name" value="Pchlide_reductase_B"/>
    <property type="match status" value="1"/>
</dbReference>
<dbReference type="Gene3D" id="1.20.89.20">
    <property type="match status" value="1"/>
</dbReference>
<dbReference type="Gene3D" id="3.40.50.1980">
    <property type="entry name" value="Nitrogenase molybdenum iron protein domain"/>
    <property type="match status" value="3"/>
</dbReference>
<dbReference type="Gene3D" id="1.10.8.550">
    <property type="entry name" value="Proto-chlorophyllide reductase 57 kD subunit B"/>
    <property type="match status" value="1"/>
</dbReference>
<dbReference type="HAMAP" id="MF_00353">
    <property type="entry name" value="ChlB_BchB"/>
    <property type="match status" value="1"/>
</dbReference>
<dbReference type="InterPro" id="IPR050152">
    <property type="entry name" value="ChlB/BchB/BchZ"/>
</dbReference>
<dbReference type="InterPro" id="IPR013580">
    <property type="entry name" value="LI-POR_suB-like_C"/>
</dbReference>
<dbReference type="InterPro" id="IPR000510">
    <property type="entry name" value="Nase/OxRdtase_comp1"/>
</dbReference>
<dbReference type="InterPro" id="IPR042298">
    <property type="entry name" value="P-CP_red_C"/>
</dbReference>
<dbReference type="InterPro" id="IPR005969">
    <property type="entry name" value="Protochl_reductB"/>
</dbReference>
<dbReference type="InterPro" id="IPR016209">
    <property type="entry name" value="Protochlorophyllide_Rdtase"/>
</dbReference>
<dbReference type="NCBIfam" id="TIGR01278">
    <property type="entry name" value="DPOR_BchB"/>
    <property type="match status" value="1"/>
</dbReference>
<dbReference type="PANTHER" id="PTHR33712">
    <property type="entry name" value="LIGHT-INDEPENDENT PROTOCHLOROPHYLLIDE REDUCTASE SUBUNIT B"/>
    <property type="match status" value="1"/>
</dbReference>
<dbReference type="PANTHER" id="PTHR33712:SF7">
    <property type="entry name" value="LIGHT-INDEPENDENT PROTOCHLOROPHYLLIDE REDUCTASE SUBUNIT B"/>
    <property type="match status" value="1"/>
</dbReference>
<dbReference type="Pfam" id="PF00148">
    <property type="entry name" value="Oxidored_nitro"/>
    <property type="match status" value="1"/>
</dbReference>
<dbReference type="Pfam" id="PF08369">
    <property type="entry name" value="PCP_red"/>
    <property type="match status" value="1"/>
</dbReference>
<dbReference type="PIRSF" id="PIRSF000163">
    <property type="entry name" value="PCP_ChlB"/>
    <property type="match status" value="1"/>
</dbReference>
<dbReference type="SUPFAM" id="SSF53807">
    <property type="entry name" value="Helical backbone' metal receptor"/>
    <property type="match status" value="1"/>
</dbReference>
<reference key="1">
    <citation type="journal article" date="2001" name="J. Mol. Evol.">
        <title>Horizontal transfer of the photosynthesis gene cluster and operon rearrangement in purple bacteria.</title>
        <authorList>
            <person name="Igarashi N."/>
            <person name="Harada J."/>
            <person name="Nagashima S."/>
            <person name="Matsuura K."/>
            <person name="Shimada K."/>
            <person name="Nagashima K.V.P."/>
        </authorList>
    </citation>
    <scope>NUCLEOTIDE SEQUENCE [GENOMIC DNA]</scope>
    <source>
        <strain>NBRC 100245 / IL144</strain>
    </source>
</reference>
<reference key="2">
    <citation type="journal article" date="2012" name="J. Bacteriol.">
        <title>Complete genome sequence of phototrophic betaproteobacterium Rubrivivax gelatinosus IL144.</title>
        <authorList>
            <person name="Nagashima S."/>
            <person name="Kamimura A."/>
            <person name="Shimizu T."/>
            <person name="Nakamura-Isaki S."/>
            <person name="Aono E."/>
            <person name="Sakamoto K."/>
            <person name="Ichikawa N."/>
            <person name="Nakazawa H."/>
            <person name="Sekine M."/>
            <person name="Yamazaki S."/>
            <person name="Fujita N."/>
            <person name="Shimada K."/>
            <person name="Hanada S."/>
            <person name="Nagashima K.V."/>
        </authorList>
    </citation>
    <scope>NUCLEOTIDE SEQUENCE [LARGE SCALE GENOMIC DNA]</scope>
    <source>
        <strain>NBRC 100245 / IL144</strain>
    </source>
</reference>
<name>BCHB_RUBGI</name>
<organism>
    <name type="scientific">Rubrivivax gelatinosus (strain NBRC 100245 / IL144)</name>
    <dbReference type="NCBI Taxonomy" id="983917"/>
    <lineage>
        <taxon>Bacteria</taxon>
        <taxon>Pseudomonadati</taxon>
        <taxon>Pseudomonadota</taxon>
        <taxon>Betaproteobacteria</taxon>
        <taxon>Burkholderiales</taxon>
        <taxon>Sphaerotilaceae</taxon>
        <taxon>Rubrivivax</taxon>
    </lineage>
</organism>
<protein>
    <recommendedName>
        <fullName evidence="1">Light-independent protochlorophyllide reductase subunit B</fullName>
        <shortName evidence="1">DPOR subunit B</shortName>
        <shortName evidence="1">LI-POR subunit B</shortName>
        <ecNumber evidence="1">1.3.7.7</ecNumber>
    </recommendedName>
</protein>
<sequence>MQLTLWTYEGPPHVGAMRVATALDDVHYVLHAPQGDTYADLLFTMIERLPRRPPVTYTTFQARDLGGDTAELFKTACSQAFERFRPNAMLVGASCTAELIQDDPGGLARALALPIPVVPLELPSYQRKENWGASETFYQVVRTLAGPRAPAPGTPRPAREPGAKPCCNLLGPTALGFRHRDDVREITGLLNELGIEVRTVAPLGASADDIARLGEADFNVVLYPETAQQAAGWLQRFFGQPFTKTIPIGVKATKAFIAEVLQLAGLPADTPLPDALSRSPWYSRSVDSTYLTGKRVFIFGDATHAIAAARVATEEMGFTVVGLGTYSREFARDVRDAAKHYGVEALITDDYLEVEAKVAELHPELVLGTQMERHIAKRLGVPCAVISAPVHVQDFPARYSPQMGFEGANVLFDSWVHPLMMGLEEHLLTMFRGDFEFHDGAAASHLGRAAVPPPAAAPAPAAESSDVPAVAETATAAATVAAPAASAPITVAQWAPDAQKELQKIPFFVRGKARRNTERFAAERGLATITVETLYDAKAHFGR</sequence>
<gene>
    <name evidence="1" type="primary">bchB</name>
    <name type="ordered locus">RGE_33470</name>
</gene>
<comment type="function">
    <text evidence="1">Component of the dark-operative protochlorophyllide reductase (DPOR) that uses Mg-ATP and reduced ferredoxin to reduce ring D of protochlorophyllide (Pchlide) to form chlorophyllide a (Chlide). This reaction is light-independent. The NB-protein (BchN-BchB) is the catalytic component of the complex.</text>
</comment>
<comment type="catalytic activity">
    <reaction evidence="1">
        <text>chlorophyllide a + oxidized 2[4Fe-4S]-[ferredoxin] + 2 ADP + 2 phosphate = protochlorophyllide a + reduced 2[4Fe-4S]-[ferredoxin] + 2 ATP + 2 H2O</text>
        <dbReference type="Rhea" id="RHEA:28202"/>
        <dbReference type="Rhea" id="RHEA-COMP:10002"/>
        <dbReference type="Rhea" id="RHEA-COMP:10004"/>
        <dbReference type="ChEBI" id="CHEBI:15377"/>
        <dbReference type="ChEBI" id="CHEBI:30616"/>
        <dbReference type="ChEBI" id="CHEBI:33722"/>
        <dbReference type="ChEBI" id="CHEBI:33723"/>
        <dbReference type="ChEBI" id="CHEBI:43474"/>
        <dbReference type="ChEBI" id="CHEBI:83348"/>
        <dbReference type="ChEBI" id="CHEBI:83350"/>
        <dbReference type="ChEBI" id="CHEBI:456216"/>
        <dbReference type="EC" id="1.3.7.7"/>
    </reaction>
</comment>
<comment type="cofactor">
    <cofactor evidence="1">
        <name>[4Fe-4S] cluster</name>
        <dbReference type="ChEBI" id="CHEBI:49883"/>
    </cofactor>
    <text evidence="1">Binds 1 [4Fe-4S] cluster per heterodimer. The cluster is bound at the heterodimer interface by residues from both subunits.</text>
</comment>
<comment type="pathway">
    <text evidence="1">Porphyrin-containing compound metabolism; bacteriochlorophyll biosynthesis (light-independent).</text>
</comment>
<comment type="subunit">
    <text evidence="1">Protochlorophyllide reductase is composed of three subunits; BchL, BchN and BchB. Forms a heterotetramer of two BchB and two BchN subunits.</text>
</comment>
<comment type="similarity">
    <text evidence="1">Belongs to the ChlB/BchB/BchZ family.</text>
</comment>
<accession>Q9JPA3</accession>
<accession>I0HUJ9</accession>
<feature type="chain" id="PRO_0000219801" description="Light-independent protochlorophyllide reductase subunit B">
    <location>
        <begin position="1"/>
        <end position="543"/>
    </location>
</feature>
<feature type="active site" description="Proton donor" evidence="1">
    <location>
        <position position="287"/>
    </location>
</feature>
<feature type="binding site" evidence="1">
    <location>
        <position position="36"/>
    </location>
    <ligand>
        <name>[4Fe-4S] cluster</name>
        <dbReference type="ChEBI" id="CHEBI:49883"/>
        <note>ligand shared with heterodimeric partner</note>
    </ligand>
</feature>
<feature type="binding site" evidence="1">
    <location>
        <begin position="422"/>
        <end position="423"/>
    </location>
    <ligand>
        <name>substrate</name>
    </ligand>
</feature>
<evidence type="ECO:0000255" key="1">
    <source>
        <dbReference type="HAMAP-Rule" id="MF_00353"/>
    </source>
</evidence>
<keyword id="KW-0004">4Fe-4S</keyword>
<keyword id="KW-0067">ATP-binding</keyword>
<keyword id="KW-0077">Bacteriochlorophyll biosynthesis</keyword>
<keyword id="KW-0149">Chlorophyll biosynthesis</keyword>
<keyword id="KW-0408">Iron</keyword>
<keyword id="KW-0411">Iron-sulfur</keyword>
<keyword id="KW-0479">Metal-binding</keyword>
<keyword id="KW-0547">Nucleotide-binding</keyword>
<keyword id="KW-0560">Oxidoreductase</keyword>
<keyword id="KW-0602">Photosynthesis</keyword>
<keyword id="KW-1185">Reference proteome</keyword>